<name>RL3_BACSU</name>
<feature type="chain" id="PRO_0000077066" description="Large ribosomal subunit protein uL3">
    <location>
        <begin position="1"/>
        <end position="209"/>
    </location>
</feature>
<feature type="region of interest" description="Disordered" evidence="2">
    <location>
        <begin position="122"/>
        <end position="152"/>
    </location>
</feature>
<feature type="strand" evidence="10">
    <location>
        <begin position="4"/>
        <end position="16"/>
    </location>
</feature>
<feature type="strand" evidence="9">
    <location>
        <begin position="18"/>
        <end position="20"/>
    </location>
</feature>
<feature type="strand" evidence="10">
    <location>
        <begin position="22"/>
        <end position="29"/>
    </location>
</feature>
<feature type="strand" evidence="10">
    <location>
        <begin position="33"/>
        <end position="39"/>
    </location>
</feature>
<feature type="turn" evidence="10">
    <location>
        <begin position="41"/>
        <end position="44"/>
    </location>
</feature>
<feature type="strand" evidence="10">
    <location>
        <begin position="48"/>
        <end position="55"/>
    </location>
</feature>
<feature type="turn" evidence="10">
    <location>
        <begin position="58"/>
        <end position="60"/>
    </location>
</feature>
<feature type="helix" evidence="10">
    <location>
        <begin position="63"/>
        <end position="68"/>
    </location>
</feature>
<feature type="turn" evidence="10">
    <location>
        <begin position="69"/>
        <end position="73"/>
    </location>
</feature>
<feature type="strand" evidence="10">
    <location>
        <begin position="77"/>
        <end position="86"/>
    </location>
</feature>
<feature type="helix" evidence="10">
    <location>
        <begin position="88"/>
        <end position="90"/>
    </location>
</feature>
<feature type="helix" evidence="10">
    <location>
        <begin position="99"/>
        <end position="101"/>
    </location>
</feature>
<feature type="strand" evidence="10">
    <location>
        <begin position="107"/>
        <end position="113"/>
    </location>
</feature>
<feature type="strand" evidence="10">
    <location>
        <begin position="118"/>
        <end position="120"/>
    </location>
</feature>
<feature type="helix" evidence="10">
    <location>
        <begin position="122"/>
        <end position="126"/>
    </location>
</feature>
<feature type="strand" evidence="11">
    <location>
        <begin position="134"/>
        <end position="136"/>
    </location>
</feature>
<feature type="strand" evidence="10">
    <location>
        <begin position="162"/>
        <end position="164"/>
    </location>
</feature>
<feature type="strand" evidence="10">
    <location>
        <begin position="168"/>
        <end position="180"/>
    </location>
</feature>
<feature type="turn" evidence="10">
    <location>
        <begin position="181"/>
        <end position="184"/>
    </location>
</feature>
<feature type="strand" evidence="10">
    <location>
        <begin position="185"/>
        <end position="190"/>
    </location>
</feature>
<feature type="strand" evidence="10">
    <location>
        <begin position="199"/>
        <end position="204"/>
    </location>
</feature>
<keyword id="KW-0002">3D-structure</keyword>
<keyword id="KW-1185">Reference proteome</keyword>
<keyword id="KW-0687">Ribonucleoprotein</keyword>
<keyword id="KW-0689">Ribosomal protein</keyword>
<keyword id="KW-0694">RNA-binding</keyword>
<keyword id="KW-0698">rRNA processing</keyword>
<keyword id="KW-0699">rRNA-binding</keyword>
<accession>P42920</accession>
<proteinExistence type="evidence at protein level"/>
<protein>
    <recommendedName>
        <fullName evidence="1">Large ribosomal subunit protein uL3</fullName>
    </recommendedName>
    <alternativeName>
        <fullName evidence="6">50S ribosomal protein L3</fullName>
        <shortName>BL3</shortName>
    </alternativeName>
</protein>
<comment type="function">
    <text evidence="1 3">One of the primary rRNA binding proteins, it binds directly near the 3'-end of the 23S rRNA, where it nucleates assembly of the 50S subunit (By similarity). Strongly stimulates 23S rRNA precursor processing by mini-ribonuclease 3 (MrnC); 20-30% DMSO can replace L3, suggesting the protein may alter rRNA conformation.</text>
</comment>
<comment type="subunit">
    <text evidence="1 4 5">Part of the 50S ribosomal subunit (PubMed:30126986). Forms a cluster with proteins L14 and L19 (By similarity). Interacts with RNA helicase CshA (PubMed:23175651).</text>
</comment>
<comment type="similarity">
    <text evidence="1">Belongs to the universal ribosomal protein uL3 family.</text>
</comment>
<organism>
    <name type="scientific">Bacillus subtilis (strain 168)</name>
    <dbReference type="NCBI Taxonomy" id="224308"/>
    <lineage>
        <taxon>Bacteria</taxon>
        <taxon>Bacillati</taxon>
        <taxon>Bacillota</taxon>
        <taxon>Bacilli</taxon>
        <taxon>Bacillales</taxon>
        <taxon>Bacillaceae</taxon>
        <taxon>Bacillus</taxon>
    </lineage>
</organism>
<dbReference type="EMBL" id="U43929">
    <property type="protein sequence ID" value="AAC45956.1"/>
    <property type="molecule type" value="Genomic_DNA"/>
</dbReference>
<dbReference type="EMBL" id="D50302">
    <property type="protein sequence ID" value="BAA08831.1"/>
    <property type="molecule type" value="Genomic_DNA"/>
</dbReference>
<dbReference type="EMBL" id="AL009126">
    <property type="protein sequence ID" value="CAB11892.1"/>
    <property type="molecule type" value="Genomic_DNA"/>
</dbReference>
<dbReference type="EMBL" id="D64127">
    <property type="protein sequence ID" value="BAA11007.1"/>
    <property type="molecule type" value="Genomic_DNA"/>
</dbReference>
<dbReference type="PIR" id="G69694">
    <property type="entry name" value="G69694"/>
</dbReference>
<dbReference type="RefSeq" id="NP_387997.1">
    <property type="nucleotide sequence ID" value="NC_000964.3"/>
</dbReference>
<dbReference type="RefSeq" id="WP_004399671.1">
    <property type="nucleotide sequence ID" value="NZ_OZ025638.1"/>
</dbReference>
<dbReference type="PDB" id="3J3V">
    <property type="method" value="EM"/>
    <property type="resolution" value="13.30 A"/>
    <property type="chains" value="D=1-209"/>
</dbReference>
<dbReference type="PDB" id="3J3W">
    <property type="method" value="EM"/>
    <property type="resolution" value="10.70 A"/>
    <property type="chains" value="D=1-209"/>
</dbReference>
<dbReference type="PDB" id="3J9W">
    <property type="method" value="EM"/>
    <property type="resolution" value="3.90 A"/>
    <property type="chains" value="BE=1-209"/>
</dbReference>
<dbReference type="PDB" id="5NJT">
    <property type="method" value="EM"/>
    <property type="resolution" value="3.80 A"/>
    <property type="chains" value="X=2-208"/>
</dbReference>
<dbReference type="PDB" id="6HA1">
    <property type="method" value="EM"/>
    <property type="resolution" value="3.10 A"/>
    <property type="chains" value="D=1-209"/>
</dbReference>
<dbReference type="PDB" id="6HA8">
    <property type="method" value="EM"/>
    <property type="resolution" value="3.50 A"/>
    <property type="chains" value="D=1-209"/>
</dbReference>
<dbReference type="PDB" id="6HTQ">
    <property type="method" value="EM"/>
    <property type="resolution" value="4.50 A"/>
    <property type="chains" value="D=2-207"/>
</dbReference>
<dbReference type="PDB" id="6PPF">
    <property type="method" value="EM"/>
    <property type="resolution" value="3.40 A"/>
    <property type="chains" value="D=1-209"/>
</dbReference>
<dbReference type="PDB" id="6PPK">
    <property type="method" value="EM"/>
    <property type="resolution" value="4.40 A"/>
    <property type="chains" value="D=1-209"/>
</dbReference>
<dbReference type="PDB" id="6PVK">
    <property type="method" value="EM"/>
    <property type="resolution" value="3.40 A"/>
    <property type="chains" value="D=1-209"/>
</dbReference>
<dbReference type="PDB" id="6TNN">
    <property type="method" value="EM"/>
    <property type="resolution" value="3.07 A"/>
    <property type="chains" value="X=1-209"/>
</dbReference>
<dbReference type="PDB" id="6TPQ">
    <property type="method" value="EM"/>
    <property type="resolution" value="3.07 A"/>
    <property type="chains" value="X=1-209"/>
</dbReference>
<dbReference type="PDB" id="7AQC">
    <property type="method" value="EM"/>
    <property type="resolution" value="2.99 A"/>
    <property type="chains" value="D=1-209"/>
</dbReference>
<dbReference type="PDB" id="7AQD">
    <property type="method" value="EM"/>
    <property type="resolution" value="3.10 A"/>
    <property type="chains" value="D=1-209"/>
</dbReference>
<dbReference type="PDB" id="7AS8">
    <property type="method" value="EM"/>
    <property type="resolution" value="2.90 A"/>
    <property type="chains" value="F=1-209"/>
</dbReference>
<dbReference type="PDB" id="7AS9">
    <property type="method" value="EM"/>
    <property type="resolution" value="3.50 A"/>
    <property type="chains" value="F=1-209"/>
</dbReference>
<dbReference type="PDB" id="7O5B">
    <property type="method" value="EM"/>
    <property type="resolution" value="3.33 A"/>
    <property type="chains" value="a=1-208"/>
</dbReference>
<dbReference type="PDB" id="7OPE">
    <property type="method" value="EM"/>
    <property type="resolution" value="3.20 A"/>
    <property type="chains" value="F=1-209"/>
</dbReference>
<dbReference type="PDB" id="7QGU">
    <property type="method" value="EM"/>
    <property type="resolution" value="4.75 A"/>
    <property type="chains" value="D=1-208"/>
</dbReference>
<dbReference type="PDB" id="7QH4">
    <property type="method" value="EM"/>
    <property type="resolution" value="5.45 A"/>
    <property type="chains" value="D=1-208"/>
</dbReference>
<dbReference type="PDB" id="7QV1">
    <property type="method" value="EM"/>
    <property type="resolution" value="3.50 A"/>
    <property type="chains" value="D=1-209"/>
</dbReference>
<dbReference type="PDB" id="7QV2">
    <property type="method" value="EM"/>
    <property type="resolution" value="3.50 A"/>
    <property type="chains" value="D=1-209"/>
</dbReference>
<dbReference type="PDB" id="7QV3">
    <property type="method" value="EM"/>
    <property type="resolution" value="5.14 A"/>
    <property type="chains" value="D=1-209"/>
</dbReference>
<dbReference type="PDB" id="7S9U">
    <property type="method" value="EM"/>
    <property type="resolution" value="3.20 A"/>
    <property type="chains" value="D=1-209"/>
</dbReference>
<dbReference type="PDB" id="7SAE">
    <property type="method" value="EM"/>
    <property type="resolution" value="3.00 A"/>
    <property type="chains" value="D=1-209"/>
</dbReference>
<dbReference type="PDB" id="8BUU">
    <property type="method" value="EM"/>
    <property type="resolution" value="2.90 A"/>
    <property type="chains" value="D=1-209"/>
</dbReference>
<dbReference type="PDB" id="8QCQ">
    <property type="method" value="EM"/>
    <property type="resolution" value="2.30 A"/>
    <property type="chains" value="D=1-209"/>
</dbReference>
<dbReference type="PDB" id="8QPP">
    <property type="method" value="EM"/>
    <property type="resolution" value="3.40 A"/>
    <property type="chains" value="a=2-208"/>
</dbReference>
<dbReference type="PDB" id="8R55">
    <property type="method" value="EM"/>
    <property type="resolution" value="3.57 A"/>
    <property type="chains" value="a=2-208"/>
</dbReference>
<dbReference type="PDB" id="8S1P">
    <property type="method" value="EM"/>
    <property type="resolution" value="1.96 A"/>
    <property type="chains" value="D=1-209"/>
</dbReference>
<dbReference type="PDB" id="8S1U">
    <property type="method" value="EM"/>
    <property type="resolution" value="3.40 A"/>
    <property type="chains" value="D=1-209"/>
</dbReference>
<dbReference type="PDB" id="9BS0">
    <property type="method" value="EM"/>
    <property type="resolution" value="3.30 A"/>
    <property type="chains" value="D=1-209"/>
</dbReference>
<dbReference type="PDB" id="9BSL">
    <property type="method" value="EM"/>
    <property type="resolution" value="3.10 A"/>
    <property type="chains" value="D=1-209"/>
</dbReference>
<dbReference type="PDB" id="9BSS">
    <property type="method" value="EM"/>
    <property type="resolution" value="3.10 A"/>
    <property type="chains" value="D=1-209"/>
</dbReference>
<dbReference type="PDBsum" id="3J3V"/>
<dbReference type="PDBsum" id="3J3W"/>
<dbReference type="PDBsum" id="3J9W"/>
<dbReference type="PDBsum" id="5NJT"/>
<dbReference type="PDBsum" id="6HA1"/>
<dbReference type="PDBsum" id="6HA8"/>
<dbReference type="PDBsum" id="6HTQ"/>
<dbReference type="PDBsum" id="6PPF"/>
<dbReference type="PDBsum" id="6PPK"/>
<dbReference type="PDBsum" id="6PVK"/>
<dbReference type="PDBsum" id="6TNN"/>
<dbReference type="PDBsum" id="6TPQ"/>
<dbReference type="PDBsum" id="7AQC"/>
<dbReference type="PDBsum" id="7AQD"/>
<dbReference type="PDBsum" id="7AS8"/>
<dbReference type="PDBsum" id="7AS9"/>
<dbReference type="PDBsum" id="7O5B"/>
<dbReference type="PDBsum" id="7OPE"/>
<dbReference type="PDBsum" id="7QGU"/>
<dbReference type="PDBsum" id="7QH4"/>
<dbReference type="PDBsum" id="7QV1"/>
<dbReference type="PDBsum" id="7QV2"/>
<dbReference type="PDBsum" id="7QV3"/>
<dbReference type="PDBsum" id="7S9U"/>
<dbReference type="PDBsum" id="7SAE"/>
<dbReference type="PDBsum" id="8BUU"/>
<dbReference type="PDBsum" id="8QCQ"/>
<dbReference type="PDBsum" id="8QPP"/>
<dbReference type="PDBsum" id="8R55"/>
<dbReference type="PDBsum" id="8S1P"/>
<dbReference type="PDBsum" id="8S1U"/>
<dbReference type="PDBsum" id="9BS0"/>
<dbReference type="PDBsum" id="9BSL"/>
<dbReference type="PDBsum" id="9BSS"/>
<dbReference type="EMDB" id="EMD-0176"/>
<dbReference type="EMDB" id="EMD-0177"/>
<dbReference type="EMDB" id="EMD-0270"/>
<dbReference type="EMDB" id="EMD-10535"/>
<dbReference type="EMDB" id="EMD-10543"/>
<dbReference type="EMDB" id="EMD-11862"/>
<dbReference type="EMDB" id="EMD-11864"/>
<dbReference type="EMDB" id="EMD-11889"/>
<dbReference type="EMDB" id="EMD-11890"/>
<dbReference type="EMDB" id="EMD-12734"/>
<dbReference type="EMDB" id="EMD-13017"/>
<dbReference type="EMDB" id="EMD-14157"/>
<dbReference type="EMDB" id="EMD-14158"/>
<dbReference type="EMDB" id="EMD-14159"/>
<dbReference type="EMDB" id="EMD-16246"/>
<dbReference type="EMDB" id="EMD-18332"/>
<dbReference type="EMDB" id="EMD-19638"/>
<dbReference type="EMDB" id="EMD-19641"/>
<dbReference type="EMDB" id="EMD-3656"/>
<dbReference type="EMDB" id="EMD-44849"/>
<dbReference type="EMDB" id="EMD-44869"/>
<dbReference type="EMDB" id="EMD-44871"/>
<dbReference type="SMR" id="P42920"/>
<dbReference type="FunCoup" id="P42920">
    <property type="interactions" value="748"/>
</dbReference>
<dbReference type="IntAct" id="P42920">
    <property type="interactions" value="2"/>
</dbReference>
<dbReference type="STRING" id="224308.BSU01160"/>
<dbReference type="jPOST" id="P42920"/>
<dbReference type="PaxDb" id="224308-BSU01160"/>
<dbReference type="EnsemblBacteria" id="CAB11892">
    <property type="protein sequence ID" value="CAB11892"/>
    <property type="gene ID" value="BSU_01160"/>
</dbReference>
<dbReference type="GeneID" id="936239"/>
<dbReference type="KEGG" id="bsu:BSU01160"/>
<dbReference type="PATRIC" id="fig|224308.179.peg.119"/>
<dbReference type="eggNOG" id="COG0087">
    <property type="taxonomic scope" value="Bacteria"/>
</dbReference>
<dbReference type="InParanoid" id="P42920"/>
<dbReference type="OrthoDB" id="9806135at2"/>
<dbReference type="PhylomeDB" id="P42920"/>
<dbReference type="BioCyc" id="BSUB:BSU01160-MONOMER"/>
<dbReference type="EvolutionaryTrace" id="P42920"/>
<dbReference type="Proteomes" id="UP000001570">
    <property type="component" value="Chromosome"/>
</dbReference>
<dbReference type="GO" id="GO:0022625">
    <property type="term" value="C:cytosolic large ribosomal subunit"/>
    <property type="evidence" value="ECO:0000318"/>
    <property type="project" value="GO_Central"/>
</dbReference>
<dbReference type="GO" id="GO:0019843">
    <property type="term" value="F:rRNA binding"/>
    <property type="evidence" value="ECO:0007669"/>
    <property type="project" value="UniProtKB-UniRule"/>
</dbReference>
<dbReference type="GO" id="GO:0003735">
    <property type="term" value="F:structural constituent of ribosome"/>
    <property type="evidence" value="ECO:0000318"/>
    <property type="project" value="GO_Central"/>
</dbReference>
<dbReference type="GO" id="GO:2000234">
    <property type="term" value="P:positive regulation of rRNA processing"/>
    <property type="evidence" value="ECO:0000314"/>
    <property type="project" value="UniProtKB"/>
</dbReference>
<dbReference type="GO" id="GO:0006364">
    <property type="term" value="P:rRNA processing"/>
    <property type="evidence" value="ECO:0007669"/>
    <property type="project" value="UniProtKB-KW"/>
</dbReference>
<dbReference type="GO" id="GO:0006412">
    <property type="term" value="P:translation"/>
    <property type="evidence" value="ECO:0007669"/>
    <property type="project" value="UniProtKB-UniRule"/>
</dbReference>
<dbReference type="FunFam" id="2.40.30.10:FF:000004">
    <property type="entry name" value="50S ribosomal protein L3"/>
    <property type="match status" value="1"/>
</dbReference>
<dbReference type="FunFam" id="3.30.160.810:FF:000002">
    <property type="entry name" value="50S ribosomal protein L3"/>
    <property type="match status" value="1"/>
</dbReference>
<dbReference type="Gene3D" id="3.30.160.810">
    <property type="match status" value="1"/>
</dbReference>
<dbReference type="Gene3D" id="2.40.30.10">
    <property type="entry name" value="Translation factors"/>
    <property type="match status" value="1"/>
</dbReference>
<dbReference type="HAMAP" id="MF_01325_B">
    <property type="entry name" value="Ribosomal_uL3_B"/>
    <property type="match status" value="1"/>
</dbReference>
<dbReference type="InterPro" id="IPR000597">
    <property type="entry name" value="Ribosomal_uL3"/>
</dbReference>
<dbReference type="InterPro" id="IPR019927">
    <property type="entry name" value="Ribosomal_uL3_bac/org-type"/>
</dbReference>
<dbReference type="InterPro" id="IPR019926">
    <property type="entry name" value="Ribosomal_uL3_CS"/>
</dbReference>
<dbReference type="InterPro" id="IPR009000">
    <property type="entry name" value="Transl_B-barrel_sf"/>
</dbReference>
<dbReference type="NCBIfam" id="TIGR03625">
    <property type="entry name" value="L3_bact"/>
    <property type="match status" value="1"/>
</dbReference>
<dbReference type="PANTHER" id="PTHR11229">
    <property type="entry name" value="50S RIBOSOMAL PROTEIN L3"/>
    <property type="match status" value="1"/>
</dbReference>
<dbReference type="PANTHER" id="PTHR11229:SF16">
    <property type="entry name" value="LARGE RIBOSOMAL SUBUNIT PROTEIN UL3C"/>
    <property type="match status" value="1"/>
</dbReference>
<dbReference type="Pfam" id="PF00297">
    <property type="entry name" value="Ribosomal_L3"/>
    <property type="match status" value="1"/>
</dbReference>
<dbReference type="SUPFAM" id="SSF50447">
    <property type="entry name" value="Translation proteins"/>
    <property type="match status" value="1"/>
</dbReference>
<dbReference type="PROSITE" id="PS00474">
    <property type="entry name" value="RIBOSOMAL_L3"/>
    <property type="match status" value="1"/>
</dbReference>
<sequence>MTKGILGRKIGMTQVFAENGDLIPVTVIEAAPNVVLQKKTAENDGYEAIQLGFDDKREKLSNKPEKGHVAKAETAPKRFVKELRGVEMDAYEVGQEVKVEIFSAGEIVDVTGVSKGKGFQGAIKRHGQSRGPMSHGSRYHRRPGSMGPVDPNRVFKGKLLPGRMGGEQITVQNLEIVKVDAERNLLLIKGNVPGAKKSLITVKSAVKSK</sequence>
<evidence type="ECO:0000255" key="1">
    <source>
        <dbReference type="HAMAP-Rule" id="MF_01325"/>
    </source>
</evidence>
<evidence type="ECO:0000256" key="2">
    <source>
        <dbReference type="SAM" id="MobiDB-lite"/>
    </source>
</evidence>
<evidence type="ECO:0000269" key="3">
    <source>
    </source>
</evidence>
<evidence type="ECO:0000269" key="4">
    <source>
    </source>
</evidence>
<evidence type="ECO:0000269" key="5">
    <source>
    </source>
</evidence>
<evidence type="ECO:0000305" key="6"/>
<evidence type="ECO:0007744" key="7">
    <source>
        <dbReference type="PDB" id="6HA1"/>
    </source>
</evidence>
<evidence type="ECO:0007744" key="8">
    <source>
        <dbReference type="PDB" id="6HA8"/>
    </source>
</evidence>
<evidence type="ECO:0007829" key="9">
    <source>
        <dbReference type="PDB" id="7AS8"/>
    </source>
</evidence>
<evidence type="ECO:0007829" key="10">
    <source>
        <dbReference type="PDB" id="8S1P"/>
    </source>
</evidence>
<evidence type="ECO:0007829" key="11">
    <source>
        <dbReference type="PDB" id="9BSL"/>
    </source>
</evidence>
<reference key="1">
    <citation type="journal article" date="1997" name="J. Bacteriol.">
        <title>Analysis of the Bacillus subtilis S10 ribosomal protein gene cluster identifies two promoters that may be responsible for transcription of the entire 15-kilobase S10-spc-alpha cluster.</title>
        <authorList>
            <person name="Li X."/>
            <person name="Lindahl L."/>
            <person name="Sha Y."/>
            <person name="Zengel J.M."/>
        </authorList>
    </citation>
    <scope>NUCLEOTIDE SEQUENCE [GENOMIC DNA]</scope>
    <source>
        <strain>SG38</strain>
    </source>
</reference>
<reference key="2">
    <citation type="journal article" date="1996" name="Microbiology">
        <title>Sequence analysis of a 50 kb region between spo0H and rrnH on the Bacillus subtilis chromosome.</title>
        <authorList>
            <person name="Yasumoto K."/>
            <person name="Liu H."/>
            <person name="Jeong S.M."/>
            <person name="Ohashi Y."/>
            <person name="Kakinuma S."/>
            <person name="Tanaka K."/>
            <person name="Kawamura F."/>
            <person name="Yoshikawa H."/>
            <person name="Takahashi H."/>
        </authorList>
    </citation>
    <scope>NUCLEOTIDE SEQUENCE [GENOMIC DNA]</scope>
    <source>
        <strain>168</strain>
    </source>
</reference>
<reference key="3">
    <citation type="journal article" date="1997" name="Nature">
        <title>The complete genome sequence of the Gram-positive bacterium Bacillus subtilis.</title>
        <authorList>
            <person name="Kunst F."/>
            <person name="Ogasawara N."/>
            <person name="Moszer I."/>
            <person name="Albertini A.M."/>
            <person name="Alloni G."/>
            <person name="Azevedo V."/>
            <person name="Bertero M.G."/>
            <person name="Bessieres P."/>
            <person name="Bolotin A."/>
            <person name="Borchert S."/>
            <person name="Borriss R."/>
            <person name="Boursier L."/>
            <person name="Brans A."/>
            <person name="Braun M."/>
            <person name="Brignell S.C."/>
            <person name="Bron S."/>
            <person name="Brouillet S."/>
            <person name="Bruschi C.V."/>
            <person name="Caldwell B."/>
            <person name="Capuano V."/>
            <person name="Carter N.M."/>
            <person name="Choi S.-K."/>
            <person name="Codani J.-J."/>
            <person name="Connerton I.F."/>
            <person name="Cummings N.J."/>
            <person name="Daniel R.A."/>
            <person name="Denizot F."/>
            <person name="Devine K.M."/>
            <person name="Duesterhoeft A."/>
            <person name="Ehrlich S.D."/>
            <person name="Emmerson P.T."/>
            <person name="Entian K.-D."/>
            <person name="Errington J."/>
            <person name="Fabret C."/>
            <person name="Ferrari E."/>
            <person name="Foulger D."/>
            <person name="Fritz C."/>
            <person name="Fujita M."/>
            <person name="Fujita Y."/>
            <person name="Fuma S."/>
            <person name="Galizzi A."/>
            <person name="Galleron N."/>
            <person name="Ghim S.-Y."/>
            <person name="Glaser P."/>
            <person name="Goffeau A."/>
            <person name="Golightly E.J."/>
            <person name="Grandi G."/>
            <person name="Guiseppi G."/>
            <person name="Guy B.J."/>
            <person name="Haga K."/>
            <person name="Haiech J."/>
            <person name="Harwood C.R."/>
            <person name="Henaut A."/>
            <person name="Hilbert H."/>
            <person name="Holsappel S."/>
            <person name="Hosono S."/>
            <person name="Hullo M.-F."/>
            <person name="Itaya M."/>
            <person name="Jones L.-M."/>
            <person name="Joris B."/>
            <person name="Karamata D."/>
            <person name="Kasahara Y."/>
            <person name="Klaerr-Blanchard M."/>
            <person name="Klein C."/>
            <person name="Kobayashi Y."/>
            <person name="Koetter P."/>
            <person name="Koningstein G."/>
            <person name="Krogh S."/>
            <person name="Kumano M."/>
            <person name="Kurita K."/>
            <person name="Lapidus A."/>
            <person name="Lardinois S."/>
            <person name="Lauber J."/>
            <person name="Lazarevic V."/>
            <person name="Lee S.-M."/>
            <person name="Levine A."/>
            <person name="Liu H."/>
            <person name="Masuda S."/>
            <person name="Mauel C."/>
            <person name="Medigue C."/>
            <person name="Medina N."/>
            <person name="Mellado R.P."/>
            <person name="Mizuno M."/>
            <person name="Moestl D."/>
            <person name="Nakai S."/>
            <person name="Noback M."/>
            <person name="Noone D."/>
            <person name="O'Reilly M."/>
            <person name="Ogawa K."/>
            <person name="Ogiwara A."/>
            <person name="Oudega B."/>
            <person name="Park S.-H."/>
            <person name="Parro V."/>
            <person name="Pohl T.M."/>
            <person name="Portetelle D."/>
            <person name="Porwollik S."/>
            <person name="Prescott A.M."/>
            <person name="Presecan E."/>
            <person name="Pujic P."/>
            <person name="Purnelle B."/>
            <person name="Rapoport G."/>
            <person name="Rey M."/>
            <person name="Reynolds S."/>
            <person name="Rieger M."/>
            <person name="Rivolta C."/>
            <person name="Rocha E."/>
            <person name="Roche B."/>
            <person name="Rose M."/>
            <person name="Sadaie Y."/>
            <person name="Sato T."/>
            <person name="Scanlan E."/>
            <person name="Schleich S."/>
            <person name="Schroeter R."/>
            <person name="Scoffone F."/>
            <person name="Sekiguchi J."/>
            <person name="Sekowska A."/>
            <person name="Seror S.J."/>
            <person name="Serror P."/>
            <person name="Shin B.-S."/>
            <person name="Soldo B."/>
            <person name="Sorokin A."/>
            <person name="Tacconi E."/>
            <person name="Takagi T."/>
            <person name="Takahashi H."/>
            <person name="Takemaru K."/>
            <person name="Takeuchi M."/>
            <person name="Tamakoshi A."/>
            <person name="Tanaka T."/>
            <person name="Terpstra P."/>
            <person name="Tognoni A."/>
            <person name="Tosato V."/>
            <person name="Uchiyama S."/>
            <person name="Vandenbol M."/>
            <person name="Vannier F."/>
            <person name="Vassarotti A."/>
            <person name="Viari A."/>
            <person name="Wambutt R."/>
            <person name="Wedler E."/>
            <person name="Wedler H."/>
            <person name="Weitzenegger T."/>
            <person name="Winters P."/>
            <person name="Wipat A."/>
            <person name="Yamamoto H."/>
            <person name="Yamane K."/>
            <person name="Yasumoto K."/>
            <person name="Yata K."/>
            <person name="Yoshida K."/>
            <person name="Yoshikawa H.-F."/>
            <person name="Zumstein E."/>
            <person name="Yoshikawa H."/>
            <person name="Danchin A."/>
        </authorList>
    </citation>
    <scope>NUCLEOTIDE SEQUENCE [LARGE SCALE GENOMIC DNA]</scope>
    <source>
        <strain>168</strain>
    </source>
</reference>
<reference key="4">
    <citation type="journal article" date="2009" name="Mol. Microbiol.">
        <title>Ribosomal protein L3 bound to 23S precursor rRNA stimulates its maturation by Mini-III ribonuclease.</title>
        <authorList>
            <person name="Redko Y."/>
            <person name="Condon C."/>
        </authorList>
    </citation>
    <scope>FUNCTION IN STIMULATING RRNA PROCESSING BY MRNC (MINI-RIBONUCLEASE 3)</scope>
</reference>
<reference key="5">
    <citation type="journal article" date="2013" name="J. Bacteriol.">
        <title>DEAD-box RNA helicases in Bacillus subtilis have multiple functions and act independently from each other.</title>
        <authorList>
            <person name="Lehnik-Habrink M."/>
            <person name="Rempeters L."/>
            <person name="Kovacs A.T."/>
            <person name="Wrede C."/>
            <person name="Baierlein C."/>
            <person name="Krebber H."/>
            <person name="Kuipers O.P."/>
            <person name="Stulke J."/>
        </authorList>
    </citation>
    <scope>INTERACTION WITH CSHA</scope>
    <scope>SUBUNIT</scope>
    <source>
        <strain>168</strain>
    </source>
</reference>
<reference evidence="7 8" key="6">
    <citation type="journal article" date="2018" name="Proc. Natl. Acad. Sci. U.S.A.">
        <title>Structural basis for antibiotic resistance mediated by the Bacillus subtilis ABCF ATPase VmlR.</title>
        <authorList>
            <person name="Crowe-McAuliffe C."/>
            <person name="Graf M."/>
            <person name="Huter P."/>
            <person name="Takada H."/>
            <person name="Abdelshahid M."/>
            <person name="Novacek J."/>
            <person name="Murina V."/>
            <person name="Atkinson G.C."/>
            <person name="Hauryliuk V."/>
            <person name="Wilson D.N."/>
        </authorList>
    </citation>
    <scope>STRUCTURE BY ELECTRON MICROSCOPY (3.10 ANGSTROMS) OF 1-209 WITH AND WITHOUT VIRGINIAMYCIN M</scope>
</reference>
<gene>
    <name evidence="1" type="primary">rplC</name>
    <name type="ordered locus">BSU01160</name>
</gene>